<proteinExistence type="inferred from homology"/>
<protein>
    <recommendedName>
        <fullName evidence="1">Large ribosomal subunit protein bL34</fullName>
    </recommendedName>
    <alternativeName>
        <fullName evidence="2">50S ribosomal protein L34</fullName>
    </alternativeName>
</protein>
<organism>
    <name type="scientific">Phytoplasma australiense</name>
    <dbReference type="NCBI Taxonomy" id="59748"/>
    <lineage>
        <taxon>Bacteria</taxon>
        <taxon>Bacillati</taxon>
        <taxon>Mycoplasmatota</taxon>
        <taxon>Mollicutes</taxon>
        <taxon>Acholeplasmatales</taxon>
        <taxon>Acholeplasmataceae</taxon>
        <taxon>Candidatus Phytoplasma</taxon>
        <taxon>16SrXII (Stolbur group)</taxon>
    </lineage>
</organism>
<name>RL34_PHYAS</name>
<sequence>MKRTYQPSKIKRKRTHGFRARMATVGGCKVLARRRAKGRAQLAL</sequence>
<comment type="similarity">
    <text evidence="1">Belongs to the bacterial ribosomal protein bL34 family.</text>
</comment>
<evidence type="ECO:0000255" key="1">
    <source>
        <dbReference type="HAMAP-Rule" id="MF_00391"/>
    </source>
</evidence>
<evidence type="ECO:0000305" key="2"/>
<accession>B1VAN8</accession>
<feature type="chain" id="PRO_1000196084" description="Large ribosomal subunit protein bL34">
    <location>
        <begin position="1"/>
        <end position="44"/>
    </location>
</feature>
<keyword id="KW-1185">Reference proteome</keyword>
<keyword id="KW-0687">Ribonucleoprotein</keyword>
<keyword id="KW-0689">Ribosomal protein</keyword>
<dbReference type="EMBL" id="AM422018">
    <property type="protein sequence ID" value="CAM12011.1"/>
    <property type="molecule type" value="Genomic_DNA"/>
</dbReference>
<dbReference type="SMR" id="B1VAN8"/>
<dbReference type="STRING" id="59748.PA0677"/>
<dbReference type="KEGG" id="pal:PA0677"/>
<dbReference type="eggNOG" id="COG0230">
    <property type="taxonomic scope" value="Bacteria"/>
</dbReference>
<dbReference type="Proteomes" id="UP000008323">
    <property type="component" value="Chromosome"/>
</dbReference>
<dbReference type="GO" id="GO:1990904">
    <property type="term" value="C:ribonucleoprotein complex"/>
    <property type="evidence" value="ECO:0007669"/>
    <property type="project" value="UniProtKB-KW"/>
</dbReference>
<dbReference type="GO" id="GO:0005840">
    <property type="term" value="C:ribosome"/>
    <property type="evidence" value="ECO:0007669"/>
    <property type="project" value="UniProtKB-KW"/>
</dbReference>
<dbReference type="GO" id="GO:0003735">
    <property type="term" value="F:structural constituent of ribosome"/>
    <property type="evidence" value="ECO:0007669"/>
    <property type="project" value="InterPro"/>
</dbReference>
<dbReference type="GO" id="GO:0006412">
    <property type="term" value="P:translation"/>
    <property type="evidence" value="ECO:0007669"/>
    <property type="project" value="UniProtKB-UniRule"/>
</dbReference>
<dbReference type="FunFam" id="1.10.287.3980:FF:000001">
    <property type="entry name" value="Mitochondrial ribosomal protein L34"/>
    <property type="match status" value="1"/>
</dbReference>
<dbReference type="Gene3D" id="1.10.287.3980">
    <property type="match status" value="1"/>
</dbReference>
<dbReference type="HAMAP" id="MF_00391">
    <property type="entry name" value="Ribosomal_bL34"/>
    <property type="match status" value="1"/>
</dbReference>
<dbReference type="InterPro" id="IPR000271">
    <property type="entry name" value="Ribosomal_bL34"/>
</dbReference>
<dbReference type="InterPro" id="IPR020939">
    <property type="entry name" value="Ribosomal_bL34_CS"/>
</dbReference>
<dbReference type="NCBIfam" id="TIGR01030">
    <property type="entry name" value="rpmH_bact"/>
    <property type="match status" value="1"/>
</dbReference>
<dbReference type="PANTHER" id="PTHR14503:SF4">
    <property type="entry name" value="LARGE RIBOSOMAL SUBUNIT PROTEIN BL34M"/>
    <property type="match status" value="1"/>
</dbReference>
<dbReference type="PANTHER" id="PTHR14503">
    <property type="entry name" value="MITOCHONDRIAL RIBOSOMAL PROTEIN 34 FAMILY MEMBER"/>
    <property type="match status" value="1"/>
</dbReference>
<dbReference type="Pfam" id="PF00468">
    <property type="entry name" value="Ribosomal_L34"/>
    <property type="match status" value="1"/>
</dbReference>
<dbReference type="PROSITE" id="PS00784">
    <property type="entry name" value="RIBOSOMAL_L34"/>
    <property type="match status" value="1"/>
</dbReference>
<gene>
    <name evidence="1" type="primary">rpmH</name>
    <name type="ordered locus">PA0677</name>
</gene>
<reference key="1">
    <citation type="journal article" date="2008" name="J. Bacteriol.">
        <title>Comparative genome analysis of 'Candidatus Phytoplasma australiense' (subgroup tuf-Australia I; rp-A) and 'Ca. Phytoplasma asteris' strains OY-M and AY-WB.</title>
        <authorList>
            <person name="Tran-Nguyen L.T."/>
            <person name="Kube M."/>
            <person name="Schneider B."/>
            <person name="Reinhardt R."/>
            <person name="Gibb K.S."/>
        </authorList>
    </citation>
    <scope>NUCLEOTIDE SEQUENCE [LARGE SCALE GENOMIC DNA]</scope>
</reference>